<organism>
    <name type="scientific">Escherichia coli (strain K12)</name>
    <dbReference type="NCBI Taxonomy" id="83333"/>
    <lineage>
        <taxon>Bacteria</taxon>
        <taxon>Pseudomonadati</taxon>
        <taxon>Pseudomonadota</taxon>
        <taxon>Gammaproteobacteria</taxon>
        <taxon>Enterobacterales</taxon>
        <taxon>Enterobacteriaceae</taxon>
        <taxon>Escherichia</taxon>
    </lineage>
</organism>
<sequence length="95" mass="10521">MRAIGKLPKGVLILEFIGMMLLAVALLSVSDSLSLPEPFSRPEVQILMIFLGVLLMLPAAVVVILQVAKRLAPQLMNRPPQYSRSEREKDNDANH</sequence>
<gene>
    <name type="primary">ybjC</name>
    <name type="ordered locus">b0850</name>
    <name type="ordered locus">JW0834</name>
</gene>
<name>YBJC_ECOLI</name>
<accession>P46119</accession>
<reference key="1">
    <citation type="submission" date="1994-12" db="EMBL/GenBank/DDBJ databases">
        <authorList>
            <person name="Chatterjee P.K."/>
            <person name="Sternberg N.L."/>
        </authorList>
    </citation>
    <scope>NUCLEOTIDE SEQUENCE [GENOMIC DNA]</scope>
</reference>
<reference key="2">
    <citation type="journal article" date="1996" name="DNA Res.">
        <title>A 718-kb DNA sequence of the Escherichia coli K-12 genome corresponding to the 12.7-28.0 min region on the linkage map.</title>
        <authorList>
            <person name="Oshima T."/>
            <person name="Aiba H."/>
            <person name="Baba T."/>
            <person name="Fujita K."/>
            <person name="Hayashi K."/>
            <person name="Honjo A."/>
            <person name="Ikemoto K."/>
            <person name="Inada T."/>
            <person name="Itoh T."/>
            <person name="Kajihara M."/>
            <person name="Kanai K."/>
            <person name="Kashimoto K."/>
            <person name="Kimura S."/>
            <person name="Kitagawa M."/>
            <person name="Makino K."/>
            <person name="Masuda S."/>
            <person name="Miki T."/>
            <person name="Mizobuchi K."/>
            <person name="Mori H."/>
            <person name="Motomura K."/>
            <person name="Nakamura Y."/>
            <person name="Nashimoto H."/>
            <person name="Nishio Y."/>
            <person name="Saito N."/>
            <person name="Sampei G."/>
            <person name="Seki Y."/>
            <person name="Tagami H."/>
            <person name="Takemoto K."/>
            <person name="Wada C."/>
            <person name="Yamamoto Y."/>
            <person name="Yano M."/>
            <person name="Horiuchi T."/>
        </authorList>
    </citation>
    <scope>NUCLEOTIDE SEQUENCE [LARGE SCALE GENOMIC DNA]</scope>
    <source>
        <strain>K12 / W3110 / ATCC 27325 / DSM 5911</strain>
    </source>
</reference>
<reference key="3">
    <citation type="journal article" date="1997" name="Science">
        <title>The complete genome sequence of Escherichia coli K-12.</title>
        <authorList>
            <person name="Blattner F.R."/>
            <person name="Plunkett G. III"/>
            <person name="Bloch C.A."/>
            <person name="Perna N.T."/>
            <person name="Burland V."/>
            <person name="Riley M."/>
            <person name="Collado-Vides J."/>
            <person name="Glasner J.D."/>
            <person name="Rode C.K."/>
            <person name="Mayhew G.F."/>
            <person name="Gregor J."/>
            <person name="Davis N.W."/>
            <person name="Kirkpatrick H.A."/>
            <person name="Goeden M.A."/>
            <person name="Rose D.J."/>
            <person name="Mau B."/>
            <person name="Shao Y."/>
        </authorList>
    </citation>
    <scope>NUCLEOTIDE SEQUENCE [LARGE SCALE GENOMIC DNA]</scope>
    <source>
        <strain>K12 / MG1655 / ATCC 47076</strain>
    </source>
</reference>
<reference key="4">
    <citation type="journal article" date="2006" name="Mol. Syst. Biol.">
        <title>Highly accurate genome sequences of Escherichia coli K-12 strains MG1655 and W3110.</title>
        <authorList>
            <person name="Hayashi K."/>
            <person name="Morooka N."/>
            <person name="Yamamoto Y."/>
            <person name="Fujita K."/>
            <person name="Isono K."/>
            <person name="Choi S."/>
            <person name="Ohtsubo E."/>
            <person name="Baba T."/>
            <person name="Wanner B.L."/>
            <person name="Mori H."/>
            <person name="Horiuchi T."/>
        </authorList>
    </citation>
    <scope>NUCLEOTIDE SEQUENCE [LARGE SCALE GENOMIC DNA]</scope>
    <source>
        <strain>K12 / W3110 / ATCC 27325 / DSM 5911</strain>
    </source>
</reference>
<reference key="5">
    <citation type="journal article" date="1986" name="Gene">
        <title>Cloning and expression of the glutaredoxin (grx) gene of Escherichia coli.</title>
        <authorList>
            <person name="Hoeoeg J.-O."/>
            <person name="von Bahr-Lindstroem H."/>
            <person name="Joernvall H."/>
            <person name="Holmgren A."/>
        </authorList>
    </citation>
    <scope>NUCLEOTIDE SEQUENCE [GENOMIC DNA] OF 1-41</scope>
</reference>
<reference key="6">
    <citation type="journal article" date="1995" name="Nucleic Acids Res.">
        <title>Detection of new genes in a bacterial genome using Markov models for three gene classes.</title>
        <authorList>
            <person name="Borodovsky M."/>
            <person name="McIninch J."/>
            <person name="Koonin E.V."/>
            <person name="Rudd K.E."/>
            <person name="Medigue C."/>
            <person name="Danchin A."/>
        </authorList>
    </citation>
    <scope>IDENTIFICATION</scope>
</reference>
<feature type="chain" id="PRO_0000168735" description="Uncharacterized protein YbjC">
    <location>
        <begin position="1"/>
        <end position="95"/>
    </location>
</feature>
<protein>
    <recommendedName>
        <fullName>Uncharacterized protein YbjC</fullName>
    </recommendedName>
</protein>
<dbReference type="EMBL" id="M13449">
    <property type="status" value="NOT_ANNOTATED_CDS"/>
    <property type="molecule type" value="Genomic_DNA"/>
</dbReference>
<dbReference type="EMBL" id="U00096">
    <property type="protein sequence ID" value="AAC73937.1"/>
    <property type="molecule type" value="Genomic_DNA"/>
</dbReference>
<dbReference type="EMBL" id="AP009048">
    <property type="protein sequence ID" value="BAA35561.1"/>
    <property type="molecule type" value="Genomic_DNA"/>
</dbReference>
<dbReference type="EMBL" id="U18655">
    <property type="status" value="NOT_ANNOTATED_CDS"/>
    <property type="molecule type" value="Genomic_DNA"/>
</dbReference>
<dbReference type="PIR" id="B64823">
    <property type="entry name" value="B64823"/>
</dbReference>
<dbReference type="RefSeq" id="NP_415371.1">
    <property type="nucleotide sequence ID" value="NC_000913.3"/>
</dbReference>
<dbReference type="RefSeq" id="WP_001201560.1">
    <property type="nucleotide sequence ID" value="NZ_STEB01000019.1"/>
</dbReference>
<dbReference type="SMR" id="P46119"/>
<dbReference type="BioGRID" id="4260656">
    <property type="interactions" value="13"/>
</dbReference>
<dbReference type="FunCoup" id="P46119">
    <property type="interactions" value="15"/>
</dbReference>
<dbReference type="STRING" id="511145.b0850"/>
<dbReference type="PaxDb" id="511145-b0850"/>
<dbReference type="EnsemblBacteria" id="AAC73937">
    <property type="protein sequence ID" value="AAC73937"/>
    <property type="gene ID" value="b0850"/>
</dbReference>
<dbReference type="GeneID" id="945481"/>
<dbReference type="KEGG" id="ecj:JW0834"/>
<dbReference type="KEGG" id="eco:b0850"/>
<dbReference type="KEGG" id="ecoc:C3026_05305"/>
<dbReference type="PATRIC" id="fig|511145.12.peg.878"/>
<dbReference type="EchoBASE" id="EB2691"/>
<dbReference type="eggNOG" id="ENOG5032Z1J">
    <property type="taxonomic scope" value="Bacteria"/>
</dbReference>
<dbReference type="HOGENOM" id="CLU_161289_1_0_6"/>
<dbReference type="InParanoid" id="P46119"/>
<dbReference type="OMA" id="EFIGMMS"/>
<dbReference type="OrthoDB" id="6478907at2"/>
<dbReference type="PhylomeDB" id="P46119"/>
<dbReference type="BioCyc" id="EcoCyc:EG12842-MONOMER"/>
<dbReference type="PRO" id="PR:P46119"/>
<dbReference type="Proteomes" id="UP000000625">
    <property type="component" value="Chromosome"/>
</dbReference>
<dbReference type="GO" id="GO:0016020">
    <property type="term" value="C:membrane"/>
    <property type="evidence" value="ECO:0000314"/>
    <property type="project" value="EcoCyc"/>
</dbReference>
<dbReference type="GO" id="GO:1901422">
    <property type="term" value="P:response to butan-1-ol"/>
    <property type="evidence" value="ECO:0000270"/>
    <property type="project" value="EcoCyc"/>
</dbReference>
<dbReference type="GO" id="GO:1901562">
    <property type="term" value="P:response to paraquat"/>
    <property type="evidence" value="ECO:0000270"/>
    <property type="project" value="EcoCyc"/>
</dbReference>
<dbReference type="InterPro" id="IPR010815">
    <property type="entry name" value="DUF1418"/>
</dbReference>
<dbReference type="NCBIfam" id="NF007883">
    <property type="entry name" value="PRK10591.1-1"/>
    <property type="match status" value="1"/>
</dbReference>
<dbReference type="Pfam" id="PF07214">
    <property type="entry name" value="DUF1418"/>
    <property type="match status" value="1"/>
</dbReference>
<keyword id="KW-1185">Reference proteome</keyword>
<proteinExistence type="predicted"/>